<organismHost>
    <name type="scientific">Aves</name>
    <dbReference type="NCBI Taxonomy" id="8782"/>
</organismHost>
<organismHost>
    <name type="scientific">Cetacea</name>
    <name type="common">whales</name>
    <dbReference type="NCBI Taxonomy" id="9721"/>
</organismHost>
<organismHost>
    <name type="scientific">Homo sapiens</name>
    <name type="common">Human</name>
    <dbReference type="NCBI Taxonomy" id="9606"/>
</organismHost>
<organismHost>
    <name type="scientific">Phocidae</name>
    <name type="common">true seals</name>
    <dbReference type="NCBI Taxonomy" id="9709"/>
</organismHost>
<organismHost>
    <name type="scientific">Sus scrofa</name>
    <name type="common">Pig</name>
    <dbReference type="NCBI Taxonomy" id="9823"/>
</organismHost>
<reference key="1">
    <citation type="submission" date="2005-08" db="EMBL/GenBank/DDBJ databases">
        <title>The NIAID influenza genome sequencing project.</title>
        <authorList>
            <person name="Ghedin E."/>
            <person name="Spiro D."/>
            <person name="Miller N."/>
            <person name="Zaborsky J."/>
            <person name="Feldblyum T."/>
            <person name="Subbu V."/>
            <person name="Shumway M."/>
            <person name="Sparenborg J."/>
            <person name="Groveman L."/>
            <person name="Halpin R."/>
            <person name="Sitz J."/>
            <person name="Koo H."/>
            <person name="Salzberg S.L."/>
            <person name="Webster R.G."/>
            <person name="Hoffmann E."/>
            <person name="Krauss S."/>
            <person name="Naeve C."/>
            <person name="Bao Y."/>
            <person name="Bolotov P."/>
            <person name="Dernovoy D."/>
            <person name="Kiryutin B."/>
            <person name="Lipman D.J."/>
            <person name="Tatusova T."/>
        </authorList>
    </citation>
    <scope>NUCLEOTIDE SEQUENCE [GENOMIC RNA]</scope>
</reference>
<protein>
    <recommendedName>
        <fullName>Protein PA-X</fullName>
    </recommendedName>
</protein>
<accession>P0DJT1</accession>
<comment type="function">
    <text evidence="1 4">Plays a major role in the shutoff of the host protein expression by cleaving mRNAs probably via an endonuclease activity. This host shutoff allows the virus to escape from the host antiviral response (By similarity). Hijacks host RNA splicing machinery to selectively target host RNAs containing introns for destruction. This may explain the preferential degradation of RNAs that have undergone co- or post-transcriptional processing (By similarity).</text>
</comment>
<comment type="subcellular location">
    <subcellularLocation>
        <location evidence="4">Host cytoplasm</location>
    </subcellularLocation>
    <subcellularLocation>
        <location evidence="4">Host nucleus</location>
    </subcellularLocation>
</comment>
<comment type="alternative products">
    <event type="ribosomal frameshifting"/>
    <isoform>
        <id>P0DJT1-1</id>
        <name>PA-X</name>
        <sequence type="displayed"/>
    </isoform>
    <isoform>
        <id>Q463W8-1</id>
        <name>PA</name>
        <sequence type="external"/>
    </isoform>
</comment>
<comment type="domain">
    <text evidence="1 4">The probable endonuclease active site in the N-terminus and the basic amino acid cluster in the C-terminus are important for the shutoff activity. The C-terminus acts as a nuclear localization signal (By similarity). The C-terminus is recruited to host protein complexes involved in nuclear Pol II RNA processing (By similarity).</text>
</comment>
<comment type="similarity">
    <text evidence="6">Belongs to the influenza viruses PA-X family.</text>
</comment>
<dbReference type="EMBL" id="CY002101">
    <property type="status" value="NOT_ANNOTATED_CDS"/>
    <property type="molecule type" value="Genomic_RNA"/>
</dbReference>
<dbReference type="SMR" id="P0DJT1"/>
<dbReference type="Proteomes" id="UP000118421">
    <property type="component" value="Genome"/>
</dbReference>
<dbReference type="GO" id="GO:0003723">
    <property type="term" value="F:RNA binding"/>
    <property type="evidence" value="ECO:0007669"/>
    <property type="project" value="InterPro"/>
</dbReference>
<dbReference type="GO" id="GO:0039694">
    <property type="term" value="P:viral RNA genome replication"/>
    <property type="evidence" value="ECO:0007669"/>
    <property type="project" value="InterPro"/>
</dbReference>
<dbReference type="GO" id="GO:0075523">
    <property type="term" value="P:viral translational frameshifting"/>
    <property type="evidence" value="ECO:0007669"/>
    <property type="project" value="UniProtKB-KW"/>
</dbReference>
<dbReference type="FunFam" id="3.40.91.90:FF:000001">
    <property type="entry name" value="Polymerase acidic protein"/>
    <property type="match status" value="1"/>
</dbReference>
<dbReference type="Gene3D" id="3.40.91.90">
    <property type="entry name" value="Influenza RNA-dependent RNA polymerase subunit PA, endonuclease domain"/>
    <property type="match status" value="1"/>
</dbReference>
<dbReference type="InterPro" id="IPR001009">
    <property type="entry name" value="PA/PA-X"/>
</dbReference>
<dbReference type="InterPro" id="IPR038372">
    <property type="entry name" value="PA/PA-X_sf"/>
</dbReference>
<dbReference type="Pfam" id="PF00603">
    <property type="entry name" value="Flu_PA"/>
    <property type="match status" value="1"/>
</dbReference>
<sequence>MEDFVRQCFNPMIVELAEKAMKEYGEDLKIETNKFAAICTHLEVCFMYSDFHFINEQGESIVVELDDPNALLKHRFEIIEGRDRTMAWTVVNSICNTTGAEKPKFLPDLYDYKENRFIEIGVTRREVHIYYLEKANKIKSENTHIHIFSFTGEEMATKADYTLDEESRARIKTRLFTIRQEMANRGLWDSFVSPKEAKKQLKKDLKSQELCAGLPTKVSRRTSPALRILEPMWMGSNRTAALRASFLKCPKK</sequence>
<keyword id="KW-1132">Decay of host mRNAs by virus</keyword>
<keyword id="KW-1262">Eukaryotic host gene expression shutoff by virus</keyword>
<keyword id="KW-1035">Host cytoplasm</keyword>
<keyword id="KW-1190">Host gene expression shutoff by virus</keyword>
<keyword id="KW-1192">Host mRNA suppression by virus</keyword>
<keyword id="KW-1048">Host nucleus</keyword>
<keyword id="KW-0945">Host-virus interaction</keyword>
<keyword id="KW-0688">Ribosomal frameshifting</keyword>
<gene>
    <name type="primary">PA</name>
</gene>
<organism>
    <name type="scientific">Influenza A virus (strain A/Memphis/102/1972 H3N2)</name>
    <dbReference type="NCBI Taxonomy" id="385640"/>
    <lineage>
        <taxon>Viruses</taxon>
        <taxon>Riboviria</taxon>
        <taxon>Orthornavirae</taxon>
        <taxon>Negarnaviricota</taxon>
        <taxon>Polyploviricotina</taxon>
        <taxon>Insthoviricetes</taxon>
        <taxon>Articulavirales</taxon>
        <taxon>Orthomyxoviridae</taxon>
        <taxon>Alphainfluenzavirus</taxon>
        <taxon>Alphainfluenzavirus influenzae</taxon>
        <taxon>Influenza A virus</taxon>
    </lineage>
</organism>
<evidence type="ECO:0000250" key="1">
    <source>
        <dbReference type="UniProtKB" id="P0CK64"/>
    </source>
</evidence>
<evidence type="ECO:0000250" key="2">
    <source>
        <dbReference type="UniProtKB" id="P0CK68"/>
    </source>
</evidence>
<evidence type="ECO:0000250" key="3">
    <source>
        <dbReference type="UniProtKB" id="P0DJW8"/>
    </source>
</evidence>
<evidence type="ECO:0000250" key="4">
    <source>
        <dbReference type="UniProtKB" id="P0DXO5"/>
    </source>
</evidence>
<evidence type="ECO:0000250" key="5">
    <source>
        <dbReference type="UniProtKB" id="P0DXO6"/>
    </source>
</evidence>
<evidence type="ECO:0000305" key="6"/>
<feature type="chain" id="PRO_0000419394" description="Protein PA-X">
    <location>
        <begin position="1"/>
        <end position="252"/>
    </location>
</feature>
<feature type="active site" evidence="2">
    <location>
        <position position="80"/>
    </location>
</feature>
<feature type="active site" evidence="2">
    <location>
        <position position="108"/>
    </location>
</feature>
<feature type="site" description="Important for efficient shutoff activity" evidence="5">
    <location>
        <position position="28"/>
    </location>
</feature>
<feature type="site" description="Important for efficient shutoff activity" evidence="5">
    <location>
        <position position="65"/>
    </location>
</feature>
<feature type="site" description="Important for efficient shutoff activity and nuclear localization" evidence="4">
    <location>
        <position position="195"/>
    </location>
</feature>
<feature type="site" description="Important for efficient shutoff activity and nuclear localization" evidence="4">
    <location>
        <position position="198"/>
    </location>
</feature>
<feature type="site" description="Important for efficient shutoff activity and nuclear localization" evidence="4">
    <location>
        <position position="199"/>
    </location>
</feature>
<feature type="site" description="Important for efficient shutoff activity" evidence="3">
    <location>
        <position position="202"/>
    </location>
</feature>
<feature type="site" description="Important for efficient shutoff activity" evidence="3">
    <location>
        <position position="203"/>
    </location>
</feature>
<feature type="site" description="Important for efficient shutoff activity" evidence="3">
    <location>
        <position position="206"/>
    </location>
</feature>
<proteinExistence type="inferred from homology"/>
<name>PAX_I72A3</name>